<name>CENPA_MONSE</name>
<reference key="1">
    <citation type="submission" date="2006-06" db="EMBL/GenBank/DDBJ databases">
        <title>Phylogenetic analysis of fungal cenH3 proteins.</title>
        <authorList>
            <person name="Baker R.E."/>
            <person name="Rogers K."/>
        </authorList>
    </citation>
    <scope>NUCLEOTIDE SEQUENCE [GENOMIC DNA]</scope>
    <source>
        <strain>ARSCC Y-12661</strain>
    </source>
</reference>
<gene>
    <name type="primary">CSE4</name>
</gene>
<comment type="function">
    <text evidence="1">Histone H3-like nucleosomal protein that is specifically found in centromeric nucleosomes. Replaces conventional H3 in the nucleosome core of centromeric chromatin that serves as an assembly site for the inner kinetochore. Required for recruitment and assembly of kinetochore proteins, mitotic progression and chromosome segregation. May serve as an epigenetic mark that propagates centromere identity through replication and cell division (By similarity).</text>
</comment>
<comment type="subunit">
    <text evidence="1">Component of centromeric nucleosomes, where DNA is wrapped around a histone octamer core. The octamer contains two molecules each of H2A, H2B, CSE4/CENPA and H4 assembled in one CSE4-H4 heterotetramer and two H2A-H2B heterodimers. Interacts with the inner kinetochore.</text>
</comment>
<comment type="subcellular location">
    <subcellularLocation>
        <location evidence="1">Nucleus</location>
    </subcellularLocation>
    <subcellularLocation>
        <location evidence="1">Chromosome</location>
        <location evidence="1">Centromere</location>
    </subcellularLocation>
</comment>
<comment type="PTM">
    <text evidence="1">Ubiquitinated. Is degraded through ubiquitin-mediated proteolysis when not protected by its association to the kinetochore.</text>
</comment>
<comment type="similarity">
    <text evidence="3">Belongs to the histone H3 family.</text>
</comment>
<organism>
    <name type="scientific">Monosporozyma servazzii</name>
    <name type="common">Yeast</name>
    <name type="synonym">Kazachstania servazzii</name>
    <dbReference type="NCBI Taxonomy" id="27293"/>
    <lineage>
        <taxon>Eukaryota</taxon>
        <taxon>Fungi</taxon>
        <taxon>Dikarya</taxon>
        <taxon>Ascomycota</taxon>
        <taxon>Saccharomycotina</taxon>
        <taxon>Saccharomycetes</taxon>
        <taxon>Saccharomycetales</taxon>
        <taxon>Saccharomycetaceae</taxon>
        <taxon>Monosporozyma</taxon>
    </lineage>
</organism>
<evidence type="ECO:0000250" key="1">
    <source>
        <dbReference type="UniProtKB" id="P36012"/>
    </source>
</evidence>
<evidence type="ECO:0000256" key="2">
    <source>
        <dbReference type="SAM" id="MobiDB-lite"/>
    </source>
</evidence>
<evidence type="ECO:0000305" key="3"/>
<accession>Q0MXD0</accession>
<feature type="chain" id="PRO_0000270602" description="Histone H3-like centromeric protein CSE4">
    <location>
        <begin position="1"/>
        <end position="293"/>
    </location>
</feature>
<feature type="region of interest" description="Disordered" evidence="2">
    <location>
        <begin position="132"/>
        <end position="169"/>
    </location>
</feature>
<feature type="region of interest" description="H3-like">
    <location>
        <begin position="157"/>
        <end position="291"/>
    </location>
</feature>
<feature type="compositionally biased region" description="Acidic residues" evidence="2">
    <location>
        <begin position="132"/>
        <end position="141"/>
    </location>
</feature>
<feature type="compositionally biased region" description="Basic and acidic residues" evidence="2">
    <location>
        <begin position="150"/>
        <end position="164"/>
    </location>
</feature>
<keyword id="KW-0137">Centromere</keyword>
<keyword id="KW-0158">Chromosome</keyword>
<keyword id="KW-0238">DNA-binding</keyword>
<keyword id="KW-0544">Nucleosome core</keyword>
<keyword id="KW-0539">Nucleus</keyword>
<keyword id="KW-0832">Ubl conjugation</keyword>
<protein>
    <recommendedName>
        <fullName>Histone H3-like centromeric protein CSE4</fullName>
    </recommendedName>
    <alternativeName>
        <fullName>CENP-A homolog</fullName>
    </alternativeName>
    <alternativeName>
        <fullName evidence="3">CENPA homolog</fullName>
    </alternativeName>
</protein>
<sequence length="293" mass="34129">MQSQQYSTPNLSLFNDGSAIIGEIRPIHGANQDVINDRALQLLQRTREHRNFLHRAHDDIRRYEPPTTQIDALENDEDENFYLNDMNTNEEYQSDRESVKSGLNSIANRYKNAVQSSPSDLDDIDFVGEEEQDLSYDESDYSDPLQEIDSNYRESPRRTTDKILKSSSKNYRRRENLGGEIRKIRQEKANKTATRYRPSDLALYEIRKYQQSTDLLISKIPFARLVKEVTDNFILENQHLQWHSMAILALQEASEAYLVGLLEHANLLALHAKRITLMKKDVQLARRIRGQFI</sequence>
<proteinExistence type="inferred from homology"/>
<dbReference type="EMBL" id="DQ826421">
    <property type="protein sequence ID" value="ABH11660.1"/>
    <property type="molecule type" value="Genomic_DNA"/>
</dbReference>
<dbReference type="SMR" id="Q0MXD0"/>
<dbReference type="GO" id="GO:0000775">
    <property type="term" value="C:chromosome, centromeric region"/>
    <property type="evidence" value="ECO:0007669"/>
    <property type="project" value="UniProtKB-SubCell"/>
</dbReference>
<dbReference type="GO" id="GO:0000786">
    <property type="term" value="C:nucleosome"/>
    <property type="evidence" value="ECO:0007669"/>
    <property type="project" value="UniProtKB-KW"/>
</dbReference>
<dbReference type="GO" id="GO:0005634">
    <property type="term" value="C:nucleus"/>
    <property type="evidence" value="ECO:0007669"/>
    <property type="project" value="UniProtKB-SubCell"/>
</dbReference>
<dbReference type="GO" id="GO:0003677">
    <property type="term" value="F:DNA binding"/>
    <property type="evidence" value="ECO:0007669"/>
    <property type="project" value="UniProtKB-KW"/>
</dbReference>
<dbReference type="GO" id="GO:0046982">
    <property type="term" value="F:protein heterodimerization activity"/>
    <property type="evidence" value="ECO:0007669"/>
    <property type="project" value="InterPro"/>
</dbReference>
<dbReference type="GO" id="GO:0030527">
    <property type="term" value="F:structural constituent of chromatin"/>
    <property type="evidence" value="ECO:0007669"/>
    <property type="project" value="InterPro"/>
</dbReference>
<dbReference type="CDD" id="cd22911">
    <property type="entry name" value="HFD_H3"/>
    <property type="match status" value="1"/>
</dbReference>
<dbReference type="FunFam" id="1.10.20.10:FF:000085">
    <property type="entry name" value="Histone H3.2"/>
    <property type="match status" value="1"/>
</dbReference>
<dbReference type="Gene3D" id="1.10.20.10">
    <property type="entry name" value="Histone, subunit A"/>
    <property type="match status" value="1"/>
</dbReference>
<dbReference type="InterPro" id="IPR009072">
    <property type="entry name" value="Histone-fold"/>
</dbReference>
<dbReference type="InterPro" id="IPR007125">
    <property type="entry name" value="Histone_H2A/H2B/H3"/>
</dbReference>
<dbReference type="InterPro" id="IPR000164">
    <property type="entry name" value="Histone_H3/CENP-A"/>
</dbReference>
<dbReference type="PANTHER" id="PTHR45810">
    <property type="entry name" value="HISTONE H3.2"/>
    <property type="match status" value="1"/>
</dbReference>
<dbReference type="Pfam" id="PF00125">
    <property type="entry name" value="Histone"/>
    <property type="match status" value="1"/>
</dbReference>
<dbReference type="PRINTS" id="PR00622">
    <property type="entry name" value="HISTONEH3"/>
</dbReference>
<dbReference type="SMART" id="SM00428">
    <property type="entry name" value="H3"/>
    <property type="match status" value="1"/>
</dbReference>
<dbReference type="SUPFAM" id="SSF47113">
    <property type="entry name" value="Histone-fold"/>
    <property type="match status" value="1"/>
</dbReference>
<dbReference type="PROSITE" id="PS00959">
    <property type="entry name" value="HISTONE_H3_2"/>
    <property type="match status" value="1"/>
</dbReference>